<accession>P0AF60</accession>
<accession>P39273</accession>
<dbReference type="EMBL" id="AE005174">
    <property type="protein sequence ID" value="AAG59325.1"/>
    <property type="molecule type" value="Genomic_DNA"/>
</dbReference>
<dbReference type="EMBL" id="BA000007">
    <property type="protein sequence ID" value="BAB38531.1"/>
    <property type="molecule type" value="Genomic_DNA"/>
</dbReference>
<dbReference type="PIR" id="A86108">
    <property type="entry name" value="A86108"/>
</dbReference>
<dbReference type="PIR" id="D91267">
    <property type="entry name" value="D91267"/>
</dbReference>
<dbReference type="RefSeq" id="NP_313135.1">
    <property type="nucleotide sequence ID" value="NC_002695.1"/>
</dbReference>
<dbReference type="RefSeq" id="WP_000371704.1">
    <property type="nucleotide sequence ID" value="NZ_VOAI01000008.1"/>
</dbReference>
<dbReference type="SMR" id="P0AF60"/>
<dbReference type="STRING" id="155864.Z5728"/>
<dbReference type="GeneID" id="75169644"/>
<dbReference type="GeneID" id="914209"/>
<dbReference type="KEGG" id="ece:Z5728"/>
<dbReference type="KEGG" id="ecs:ECs_5108"/>
<dbReference type="PATRIC" id="fig|386585.9.peg.5338"/>
<dbReference type="eggNOG" id="COG3592">
    <property type="taxonomic scope" value="Bacteria"/>
</dbReference>
<dbReference type="HOGENOM" id="CLU_139698_2_0_6"/>
<dbReference type="OMA" id="YFNTNVC"/>
<dbReference type="Proteomes" id="UP000000558">
    <property type="component" value="Chromosome"/>
</dbReference>
<dbReference type="Proteomes" id="UP000002519">
    <property type="component" value="Chromosome"/>
</dbReference>
<dbReference type="InterPro" id="IPR010693">
    <property type="entry name" value="Divergent_4Fe-4S_mono-cluster"/>
</dbReference>
<dbReference type="Pfam" id="PF06902">
    <property type="entry name" value="Fer4_19"/>
    <property type="match status" value="1"/>
</dbReference>
<feature type="chain" id="PRO_0000169731" description="Uncharacterized protein YjdI">
    <location>
        <begin position="1"/>
        <end position="76"/>
    </location>
</feature>
<gene>
    <name type="primary">yjdI</name>
    <name type="ordered locus">Z5728</name>
    <name type="ordered locus">ECs5108</name>
</gene>
<sequence length="76" mass="8550">MDQALLDGGYRCYTGEKIDVYFNTAICQHSGNCVRGNGKLFNLKRKPWIMPDEVDVATVVKVIDTCPSGALKYRHK</sequence>
<organism>
    <name type="scientific">Escherichia coli O157:H7</name>
    <dbReference type="NCBI Taxonomy" id="83334"/>
    <lineage>
        <taxon>Bacteria</taxon>
        <taxon>Pseudomonadati</taxon>
        <taxon>Pseudomonadota</taxon>
        <taxon>Gammaproteobacteria</taxon>
        <taxon>Enterobacterales</taxon>
        <taxon>Enterobacteriaceae</taxon>
        <taxon>Escherichia</taxon>
    </lineage>
</organism>
<proteinExistence type="predicted"/>
<keyword id="KW-1185">Reference proteome</keyword>
<name>YJDI_ECO57</name>
<reference key="1">
    <citation type="journal article" date="2001" name="Nature">
        <title>Genome sequence of enterohaemorrhagic Escherichia coli O157:H7.</title>
        <authorList>
            <person name="Perna N.T."/>
            <person name="Plunkett G. III"/>
            <person name="Burland V."/>
            <person name="Mau B."/>
            <person name="Glasner J.D."/>
            <person name="Rose D.J."/>
            <person name="Mayhew G.F."/>
            <person name="Evans P.S."/>
            <person name="Gregor J."/>
            <person name="Kirkpatrick H.A."/>
            <person name="Posfai G."/>
            <person name="Hackett J."/>
            <person name="Klink S."/>
            <person name="Boutin A."/>
            <person name="Shao Y."/>
            <person name="Miller L."/>
            <person name="Grotbeck E.J."/>
            <person name="Davis N.W."/>
            <person name="Lim A."/>
            <person name="Dimalanta E.T."/>
            <person name="Potamousis K."/>
            <person name="Apodaca J."/>
            <person name="Anantharaman T.S."/>
            <person name="Lin J."/>
            <person name="Yen G."/>
            <person name="Schwartz D.C."/>
            <person name="Welch R.A."/>
            <person name="Blattner F.R."/>
        </authorList>
    </citation>
    <scope>NUCLEOTIDE SEQUENCE [LARGE SCALE GENOMIC DNA]</scope>
    <source>
        <strain>O157:H7 / EDL933 / ATCC 700927 / EHEC</strain>
    </source>
</reference>
<reference key="2">
    <citation type="journal article" date="2001" name="DNA Res.">
        <title>Complete genome sequence of enterohemorrhagic Escherichia coli O157:H7 and genomic comparison with a laboratory strain K-12.</title>
        <authorList>
            <person name="Hayashi T."/>
            <person name="Makino K."/>
            <person name="Ohnishi M."/>
            <person name="Kurokawa K."/>
            <person name="Ishii K."/>
            <person name="Yokoyama K."/>
            <person name="Han C.-G."/>
            <person name="Ohtsubo E."/>
            <person name="Nakayama K."/>
            <person name="Murata T."/>
            <person name="Tanaka M."/>
            <person name="Tobe T."/>
            <person name="Iida T."/>
            <person name="Takami H."/>
            <person name="Honda T."/>
            <person name="Sasakawa C."/>
            <person name="Ogasawara N."/>
            <person name="Yasunaga T."/>
            <person name="Kuhara S."/>
            <person name="Shiba T."/>
            <person name="Hattori M."/>
            <person name="Shinagawa H."/>
        </authorList>
    </citation>
    <scope>NUCLEOTIDE SEQUENCE [LARGE SCALE GENOMIC DNA]</scope>
    <source>
        <strain>O157:H7 / Sakai / RIMD 0509952 / EHEC</strain>
    </source>
</reference>
<protein>
    <recommendedName>
        <fullName>Uncharacterized protein YjdI</fullName>
    </recommendedName>
</protein>